<proteinExistence type="inferred from homology"/>
<comment type="function">
    <text evidence="1">Bifunctional enzyme that catalyzes both the deamination of dCTP to dUTP and the hydrolysis of dUTP to dUMP without releasing the toxic dUTP intermediate.</text>
</comment>
<comment type="catalytic activity">
    <reaction evidence="1">
        <text>dCTP + 2 H2O = dUMP + NH4(+) + diphosphate</text>
        <dbReference type="Rhea" id="RHEA:19205"/>
        <dbReference type="ChEBI" id="CHEBI:15377"/>
        <dbReference type="ChEBI" id="CHEBI:28938"/>
        <dbReference type="ChEBI" id="CHEBI:33019"/>
        <dbReference type="ChEBI" id="CHEBI:61481"/>
        <dbReference type="ChEBI" id="CHEBI:246422"/>
        <dbReference type="EC" id="3.5.4.30"/>
    </reaction>
</comment>
<comment type="pathway">
    <text evidence="1">Pyrimidine metabolism; dUMP biosynthesis; dUMP from dCTP: step 1/1.</text>
</comment>
<comment type="subunit">
    <text evidence="1">Homotrimer.</text>
</comment>
<comment type="similarity">
    <text evidence="1">Belongs to the dCTP deaminase family.</text>
</comment>
<protein>
    <recommendedName>
        <fullName evidence="1">dCTP deaminase, dUMP-forming</fullName>
        <ecNumber evidence="1">3.5.4.30</ecNumber>
    </recommendedName>
    <alternativeName>
        <fullName evidence="1">Bifunctional dCTP deaminase:dUTPase</fullName>
    </alternativeName>
    <alternativeName>
        <fullName evidence="1">DCD-DUT</fullName>
    </alternativeName>
</protein>
<gene>
    <name evidence="1" type="primary">dcd</name>
    <name type="ordered locus">TW796</name>
</gene>
<feature type="chain" id="PRO_0000156016" description="dCTP deaminase, dUMP-forming">
    <location>
        <begin position="1"/>
        <end position="196"/>
    </location>
</feature>
<feature type="active site" description="Proton donor/acceptor" evidence="1">
    <location>
        <position position="129"/>
    </location>
</feature>
<feature type="binding site" evidence="1">
    <location>
        <begin position="101"/>
        <end position="106"/>
    </location>
    <ligand>
        <name>dCTP</name>
        <dbReference type="ChEBI" id="CHEBI:61481"/>
    </ligand>
</feature>
<feature type="binding site" evidence="1">
    <location>
        <position position="119"/>
    </location>
    <ligand>
        <name>dCTP</name>
        <dbReference type="ChEBI" id="CHEBI:61481"/>
    </ligand>
</feature>
<feature type="binding site" evidence="1">
    <location>
        <begin position="127"/>
        <end position="129"/>
    </location>
    <ligand>
        <name>dCTP</name>
        <dbReference type="ChEBI" id="CHEBI:61481"/>
    </ligand>
</feature>
<feature type="binding site" evidence="1">
    <location>
        <position position="148"/>
    </location>
    <ligand>
        <name>dCTP</name>
        <dbReference type="ChEBI" id="CHEBI:61481"/>
    </ligand>
</feature>
<feature type="binding site" evidence="1">
    <location>
        <position position="162"/>
    </location>
    <ligand>
        <name>dCTP</name>
        <dbReference type="ChEBI" id="CHEBI:61481"/>
    </ligand>
</feature>
<feature type="binding site" evidence="1">
    <location>
        <position position="174"/>
    </location>
    <ligand>
        <name>dCTP</name>
        <dbReference type="ChEBI" id="CHEBI:61481"/>
    </ligand>
</feature>
<feature type="site" description="Important for bifunctional activity" evidence="1">
    <location>
        <begin position="116"/>
        <end position="117"/>
    </location>
</feature>
<dbReference type="EC" id="3.5.4.30" evidence="1"/>
<dbReference type="EMBL" id="BX251412">
    <property type="protein sequence ID" value="CAD67455.1"/>
    <property type="molecule type" value="Genomic_DNA"/>
</dbReference>
<dbReference type="RefSeq" id="WP_011096733.1">
    <property type="nucleotide sequence ID" value="NC_004551.1"/>
</dbReference>
<dbReference type="SMR" id="Q83H71"/>
<dbReference type="GeneID" id="67388577"/>
<dbReference type="KEGG" id="tws:TW796"/>
<dbReference type="HOGENOM" id="CLU_087476_2_0_11"/>
<dbReference type="UniPathway" id="UPA00610">
    <property type="reaction ID" value="UER00667"/>
</dbReference>
<dbReference type="GO" id="GO:0033973">
    <property type="term" value="F:dCTP deaminase (dUMP-forming) activity"/>
    <property type="evidence" value="ECO:0007669"/>
    <property type="project" value="UniProtKB-UniRule"/>
</dbReference>
<dbReference type="GO" id="GO:0008829">
    <property type="term" value="F:dCTP deaminase activity"/>
    <property type="evidence" value="ECO:0007669"/>
    <property type="project" value="InterPro"/>
</dbReference>
<dbReference type="GO" id="GO:0000166">
    <property type="term" value="F:nucleotide binding"/>
    <property type="evidence" value="ECO:0007669"/>
    <property type="project" value="UniProtKB-KW"/>
</dbReference>
<dbReference type="GO" id="GO:0006226">
    <property type="term" value="P:dUMP biosynthetic process"/>
    <property type="evidence" value="ECO:0007669"/>
    <property type="project" value="UniProtKB-UniRule"/>
</dbReference>
<dbReference type="GO" id="GO:0006229">
    <property type="term" value="P:dUTP biosynthetic process"/>
    <property type="evidence" value="ECO:0007669"/>
    <property type="project" value="InterPro"/>
</dbReference>
<dbReference type="GO" id="GO:0015949">
    <property type="term" value="P:nucleobase-containing small molecule interconversion"/>
    <property type="evidence" value="ECO:0007669"/>
    <property type="project" value="TreeGrafter"/>
</dbReference>
<dbReference type="CDD" id="cd07557">
    <property type="entry name" value="trimeric_dUTPase"/>
    <property type="match status" value="1"/>
</dbReference>
<dbReference type="FunFam" id="2.70.40.10:FF:000005">
    <property type="entry name" value="dCTP deaminase, dUMP-forming"/>
    <property type="match status" value="1"/>
</dbReference>
<dbReference type="Gene3D" id="2.70.40.10">
    <property type="match status" value="1"/>
</dbReference>
<dbReference type="HAMAP" id="MF_00146">
    <property type="entry name" value="dCTP_deaminase"/>
    <property type="match status" value="1"/>
</dbReference>
<dbReference type="InterPro" id="IPR011962">
    <property type="entry name" value="dCTP_deaminase"/>
</dbReference>
<dbReference type="InterPro" id="IPR036157">
    <property type="entry name" value="dUTPase-like_sf"/>
</dbReference>
<dbReference type="InterPro" id="IPR033704">
    <property type="entry name" value="dUTPase_trimeric"/>
</dbReference>
<dbReference type="NCBIfam" id="TIGR02274">
    <property type="entry name" value="dCTP_deam"/>
    <property type="match status" value="1"/>
</dbReference>
<dbReference type="PANTHER" id="PTHR42680">
    <property type="entry name" value="DCTP DEAMINASE"/>
    <property type="match status" value="1"/>
</dbReference>
<dbReference type="PANTHER" id="PTHR42680:SF3">
    <property type="entry name" value="DCTP DEAMINASE"/>
    <property type="match status" value="1"/>
</dbReference>
<dbReference type="Pfam" id="PF22769">
    <property type="entry name" value="DCD"/>
    <property type="match status" value="1"/>
</dbReference>
<dbReference type="SUPFAM" id="SSF51283">
    <property type="entry name" value="dUTPase-like"/>
    <property type="match status" value="1"/>
</dbReference>
<reference key="1">
    <citation type="journal article" date="2003" name="Lancet">
        <title>Sequencing and analysis of the genome of the Whipple's disease bacterium Tropheryma whipplei.</title>
        <authorList>
            <person name="Bentley S.D."/>
            <person name="Maiwald M."/>
            <person name="Murphy L.D."/>
            <person name="Pallen M.J."/>
            <person name="Yeats C.A."/>
            <person name="Dover L.G."/>
            <person name="Norbertczak H.T."/>
            <person name="Besra G.S."/>
            <person name="Quail M.A."/>
            <person name="Harris D.E."/>
            <person name="von Herbay A."/>
            <person name="Goble A."/>
            <person name="Rutter S."/>
            <person name="Squares R."/>
            <person name="Squares S."/>
            <person name="Barrell B.G."/>
            <person name="Parkhill J."/>
            <person name="Relman D.A."/>
        </authorList>
    </citation>
    <scope>NUCLEOTIDE SEQUENCE [LARGE SCALE GENOMIC DNA]</scope>
    <source>
        <strain>TW08/27</strain>
    </source>
</reference>
<evidence type="ECO:0000255" key="1">
    <source>
        <dbReference type="HAMAP-Rule" id="MF_00146"/>
    </source>
</evidence>
<name>DCDB_TROW8</name>
<organism>
    <name type="scientific">Tropheryma whipplei (strain TW08/27)</name>
    <name type="common">Whipple's bacillus</name>
    <dbReference type="NCBI Taxonomy" id="218496"/>
    <lineage>
        <taxon>Bacteria</taxon>
        <taxon>Bacillati</taxon>
        <taxon>Actinomycetota</taxon>
        <taxon>Actinomycetes</taxon>
        <taxon>Micrococcales</taxon>
        <taxon>Tropherymataceae</taxon>
        <taxon>Tropheryma</taxon>
    </lineage>
</organism>
<accession>Q83H71</accession>
<keyword id="KW-0378">Hydrolase</keyword>
<keyword id="KW-0546">Nucleotide metabolism</keyword>
<keyword id="KW-0547">Nucleotide-binding</keyword>
<sequence length="196" mass="21571">MLLSDVDIQAALEDKLIQIDPFDPQMLQPASLDIRLSRYFRLFNNHTYAYIDPAEPQEALTRLVEVAENQAFVLHPGEFILGSTCETVSLSNDLAARLEGKSSLGRLGLLTHSTAGFIDPGFSGQITLELGNVATLPIKLWPGMKIGQLCFFQLSSPAKNAYGSPVCASRYQGQRGPTASLSHQHFYRARFTEIGL</sequence>